<sequence>MGLSKTIPLVLLPILMFGVLSNAQLTSDFYSTTCPNVTAIARGLIERASRNDVRLTAKVMRLHFHDCFVNGCDGSVLLDAAPADGVEGEKEAFQNAGSLDGFEVIDDIKTALENVCPGVVSCADILAIAAEISVALAGGPSLDVLLGRRDGRTAIRADAVAALPLGPDSLEILTSKFSVHNLDTTDLVALSGAHTFGRVQCGVINNRLHNFSGNSGQSDPSIEPEFLQTLRRQCPQGGDLTARANLDPTSPDSFDNDYFKNLQNNRGVIESDQILFSSTGAPTVSLVNRFAENQNEFFTNFARSMIKMGNVRILTGREGEIRRDCRRVN</sequence>
<reference key="1">
    <citation type="journal article" date="2000" name="Nature">
        <title>Sequence and analysis of chromosome 5 of the plant Arabidopsis thaliana.</title>
        <authorList>
            <person name="Tabata S."/>
            <person name="Kaneko T."/>
            <person name="Nakamura Y."/>
            <person name="Kotani H."/>
            <person name="Kato T."/>
            <person name="Asamizu E."/>
            <person name="Miyajima N."/>
            <person name="Sasamoto S."/>
            <person name="Kimura T."/>
            <person name="Hosouchi T."/>
            <person name="Kawashima K."/>
            <person name="Kohara M."/>
            <person name="Matsumoto M."/>
            <person name="Matsuno A."/>
            <person name="Muraki A."/>
            <person name="Nakayama S."/>
            <person name="Nakazaki N."/>
            <person name="Naruo K."/>
            <person name="Okumura S."/>
            <person name="Shinpo S."/>
            <person name="Takeuchi C."/>
            <person name="Wada T."/>
            <person name="Watanabe A."/>
            <person name="Yamada M."/>
            <person name="Yasuda M."/>
            <person name="Sato S."/>
            <person name="de la Bastide M."/>
            <person name="Huang E."/>
            <person name="Spiegel L."/>
            <person name="Gnoj L."/>
            <person name="O'Shaughnessy A."/>
            <person name="Preston R."/>
            <person name="Habermann K."/>
            <person name="Murray J."/>
            <person name="Johnson D."/>
            <person name="Rohlfing T."/>
            <person name="Nelson J."/>
            <person name="Stoneking T."/>
            <person name="Pepin K."/>
            <person name="Spieth J."/>
            <person name="Sekhon M."/>
            <person name="Armstrong J."/>
            <person name="Becker M."/>
            <person name="Belter E."/>
            <person name="Cordum H."/>
            <person name="Cordes M."/>
            <person name="Courtney L."/>
            <person name="Courtney W."/>
            <person name="Dante M."/>
            <person name="Du H."/>
            <person name="Edwards J."/>
            <person name="Fryman J."/>
            <person name="Haakensen B."/>
            <person name="Lamar E."/>
            <person name="Latreille P."/>
            <person name="Leonard S."/>
            <person name="Meyer R."/>
            <person name="Mulvaney E."/>
            <person name="Ozersky P."/>
            <person name="Riley A."/>
            <person name="Strowmatt C."/>
            <person name="Wagner-McPherson C."/>
            <person name="Wollam A."/>
            <person name="Yoakum M."/>
            <person name="Bell M."/>
            <person name="Dedhia N."/>
            <person name="Parnell L."/>
            <person name="Shah R."/>
            <person name="Rodriguez M."/>
            <person name="Hoon See L."/>
            <person name="Vil D."/>
            <person name="Baker J."/>
            <person name="Kirchoff K."/>
            <person name="Toth K."/>
            <person name="King L."/>
            <person name="Bahret A."/>
            <person name="Miller B."/>
            <person name="Marra M.A."/>
            <person name="Martienssen R."/>
            <person name="McCombie W.R."/>
            <person name="Wilson R.K."/>
            <person name="Murphy G."/>
            <person name="Bancroft I."/>
            <person name="Volckaert G."/>
            <person name="Wambutt R."/>
            <person name="Duesterhoeft A."/>
            <person name="Stiekema W."/>
            <person name="Pohl T."/>
            <person name="Entian K.-D."/>
            <person name="Terryn N."/>
            <person name="Hartley N."/>
            <person name="Bent E."/>
            <person name="Johnson S."/>
            <person name="Langham S.-A."/>
            <person name="McCullagh B."/>
            <person name="Robben J."/>
            <person name="Grymonprez B."/>
            <person name="Zimmermann W."/>
            <person name="Ramsperger U."/>
            <person name="Wedler H."/>
            <person name="Balke K."/>
            <person name="Wedler E."/>
            <person name="Peters S."/>
            <person name="van Staveren M."/>
            <person name="Dirkse W."/>
            <person name="Mooijman P."/>
            <person name="Klein Lankhorst R."/>
            <person name="Weitzenegger T."/>
            <person name="Bothe G."/>
            <person name="Rose M."/>
            <person name="Hauf J."/>
            <person name="Berneiser S."/>
            <person name="Hempel S."/>
            <person name="Feldpausch M."/>
            <person name="Lamberth S."/>
            <person name="Villarroel R."/>
            <person name="Gielen J."/>
            <person name="Ardiles W."/>
            <person name="Bents O."/>
            <person name="Lemcke K."/>
            <person name="Kolesov G."/>
            <person name="Mayer K.F.X."/>
            <person name="Rudd S."/>
            <person name="Schoof H."/>
            <person name="Schueller C."/>
            <person name="Zaccaria P."/>
            <person name="Mewes H.-W."/>
            <person name="Bevan M."/>
            <person name="Fransz P.F."/>
        </authorList>
    </citation>
    <scope>NUCLEOTIDE SEQUENCE [LARGE SCALE GENOMIC DNA]</scope>
    <source>
        <strain>cv. Columbia</strain>
    </source>
</reference>
<reference key="2">
    <citation type="journal article" date="2017" name="Plant J.">
        <title>Araport11: a complete reannotation of the Arabidopsis thaliana reference genome.</title>
        <authorList>
            <person name="Cheng C.Y."/>
            <person name="Krishnakumar V."/>
            <person name="Chan A.P."/>
            <person name="Thibaud-Nissen F."/>
            <person name="Schobel S."/>
            <person name="Town C.D."/>
        </authorList>
    </citation>
    <scope>GENOME REANNOTATION</scope>
    <source>
        <strain>cv. Columbia</strain>
    </source>
</reference>
<reference key="3">
    <citation type="journal article" date="2002" name="Science">
        <title>Functional annotation of a full-length Arabidopsis cDNA collection.</title>
        <authorList>
            <person name="Seki M."/>
            <person name="Narusaka M."/>
            <person name="Kamiya A."/>
            <person name="Ishida J."/>
            <person name="Satou M."/>
            <person name="Sakurai T."/>
            <person name="Nakajima M."/>
            <person name="Enju A."/>
            <person name="Akiyama K."/>
            <person name="Oono Y."/>
            <person name="Muramatsu M."/>
            <person name="Hayashizaki Y."/>
            <person name="Kawai J."/>
            <person name="Carninci P."/>
            <person name="Itoh M."/>
            <person name="Ishii Y."/>
            <person name="Arakawa T."/>
            <person name="Shibata K."/>
            <person name="Shinagawa A."/>
            <person name="Shinozaki K."/>
        </authorList>
    </citation>
    <scope>NUCLEOTIDE SEQUENCE [LARGE SCALE MRNA]</scope>
    <source>
        <strain>cv. Columbia</strain>
    </source>
</reference>
<reference key="4">
    <citation type="submission" date="2002-03" db="EMBL/GenBank/DDBJ databases">
        <title>Full-length cDNA from Arabidopsis thaliana.</title>
        <authorList>
            <person name="Brover V.V."/>
            <person name="Troukhan M.E."/>
            <person name="Alexandrov N.A."/>
            <person name="Lu Y.-P."/>
            <person name="Flavell R.B."/>
            <person name="Feldmann K.A."/>
        </authorList>
    </citation>
    <scope>NUCLEOTIDE SEQUENCE [LARGE SCALE MRNA]</scope>
</reference>
<reference key="5">
    <citation type="journal article" date="2002" name="Gene">
        <title>Analysis and expression of the class III peroxidase large gene family in Arabidopsis thaliana.</title>
        <authorList>
            <person name="Tognolli M."/>
            <person name="Penel C."/>
            <person name="Greppin H."/>
            <person name="Simon P."/>
        </authorList>
    </citation>
    <scope>GENE FAMILY ORGANIZATION</scope>
    <scope>NOMENCLATURE</scope>
    <source>
        <strain>cv. Columbia</strain>
    </source>
</reference>
<organism>
    <name type="scientific">Arabidopsis thaliana</name>
    <name type="common">Mouse-ear cress</name>
    <dbReference type="NCBI Taxonomy" id="3702"/>
    <lineage>
        <taxon>Eukaryota</taxon>
        <taxon>Viridiplantae</taxon>
        <taxon>Streptophyta</taxon>
        <taxon>Embryophyta</taxon>
        <taxon>Tracheophyta</taxon>
        <taxon>Spermatophyta</taxon>
        <taxon>Magnoliopsida</taxon>
        <taxon>eudicotyledons</taxon>
        <taxon>Gunneridae</taxon>
        <taxon>Pentapetalae</taxon>
        <taxon>rosids</taxon>
        <taxon>malvids</taxon>
        <taxon>Brassicales</taxon>
        <taxon>Brassicaceae</taxon>
        <taxon>Camelineae</taxon>
        <taxon>Arabidopsis</taxon>
    </lineage>
</organism>
<feature type="signal peptide" evidence="1">
    <location>
        <begin position="1"/>
        <end position="23"/>
    </location>
</feature>
<feature type="chain" id="PRO_0000023723" description="Peroxidase 58">
    <location>
        <begin position="24"/>
        <end position="329"/>
    </location>
</feature>
<feature type="active site" description="Proton acceptor" evidence="2 3">
    <location>
        <position position="65"/>
    </location>
</feature>
<feature type="binding site" evidence="2">
    <location>
        <position position="66"/>
    </location>
    <ligand>
        <name>Ca(2+)</name>
        <dbReference type="ChEBI" id="CHEBI:29108"/>
        <label>1</label>
    </ligand>
</feature>
<feature type="binding site" evidence="2">
    <location>
        <position position="69"/>
    </location>
    <ligand>
        <name>Ca(2+)</name>
        <dbReference type="ChEBI" id="CHEBI:29108"/>
        <label>1</label>
    </ligand>
</feature>
<feature type="binding site" evidence="2">
    <location>
        <position position="71"/>
    </location>
    <ligand>
        <name>Ca(2+)</name>
        <dbReference type="ChEBI" id="CHEBI:29108"/>
        <label>1</label>
    </ligand>
</feature>
<feature type="binding site" evidence="2">
    <location>
        <position position="73"/>
    </location>
    <ligand>
        <name>Ca(2+)</name>
        <dbReference type="ChEBI" id="CHEBI:29108"/>
        <label>1</label>
    </ligand>
</feature>
<feature type="binding site" evidence="2">
    <location>
        <position position="75"/>
    </location>
    <ligand>
        <name>Ca(2+)</name>
        <dbReference type="ChEBI" id="CHEBI:29108"/>
        <label>1</label>
    </ligand>
</feature>
<feature type="binding site" evidence="2">
    <location>
        <position position="164"/>
    </location>
    <ligand>
        <name>substrate</name>
    </ligand>
</feature>
<feature type="binding site" description="axial binding residue" evidence="2">
    <location>
        <position position="194"/>
    </location>
    <ligand>
        <name>heme b</name>
        <dbReference type="ChEBI" id="CHEBI:60344"/>
    </ligand>
    <ligandPart>
        <name>Fe</name>
        <dbReference type="ChEBI" id="CHEBI:18248"/>
    </ligandPart>
</feature>
<feature type="binding site" evidence="2">
    <location>
        <position position="195"/>
    </location>
    <ligand>
        <name>Ca(2+)</name>
        <dbReference type="ChEBI" id="CHEBI:29108"/>
        <label>2</label>
    </ligand>
</feature>
<feature type="binding site" evidence="2">
    <location>
        <position position="247"/>
    </location>
    <ligand>
        <name>Ca(2+)</name>
        <dbReference type="ChEBI" id="CHEBI:29108"/>
        <label>2</label>
    </ligand>
</feature>
<feature type="binding site" evidence="2">
    <location>
        <position position="250"/>
    </location>
    <ligand>
        <name>Ca(2+)</name>
        <dbReference type="ChEBI" id="CHEBI:29108"/>
        <label>2</label>
    </ligand>
</feature>
<feature type="binding site" evidence="2">
    <location>
        <position position="255"/>
    </location>
    <ligand>
        <name>Ca(2+)</name>
        <dbReference type="ChEBI" id="CHEBI:29108"/>
        <label>2</label>
    </ligand>
</feature>
<feature type="site" description="Transition state stabilizer" evidence="2">
    <location>
        <position position="61"/>
    </location>
</feature>
<feature type="glycosylation site" description="N-linked (GlcNAc...) asparagine" evidence="1">
    <location>
        <position position="36"/>
    </location>
</feature>
<feature type="glycosylation site" description="N-linked (GlcNAc...) asparagine" evidence="1">
    <location>
        <position position="210"/>
    </location>
</feature>
<feature type="disulfide bond" evidence="2">
    <location>
        <begin position="34"/>
        <end position="116"/>
    </location>
</feature>
<feature type="disulfide bond" evidence="2">
    <location>
        <begin position="67"/>
        <end position="72"/>
    </location>
</feature>
<feature type="disulfide bond" evidence="2">
    <location>
        <begin position="122"/>
        <end position="325"/>
    </location>
</feature>
<feature type="disulfide bond" evidence="2">
    <location>
        <begin position="201"/>
        <end position="234"/>
    </location>
</feature>
<feature type="sequence conflict" description="In Ref. 4; AAM60837." evidence="4" ref="4">
    <original>L</original>
    <variation>W</variation>
    <location>
        <position position="142"/>
    </location>
</feature>
<feature type="sequence conflict" description="In Ref. 3; BAC42706." evidence="4" ref="3">
    <original>C</original>
    <variation>Y</variation>
    <location>
        <position position="325"/>
    </location>
</feature>
<protein>
    <recommendedName>
        <fullName>Peroxidase 58</fullName>
        <shortName>Atperox P58</shortName>
        <ecNumber>1.11.1.7</ecNumber>
    </recommendedName>
    <alternativeName>
        <fullName>ATP42</fullName>
    </alternativeName>
</protein>
<proteinExistence type="evidence at transcript level"/>
<gene>
    <name type="primary">PER58</name>
    <name type="synonym">P58</name>
    <name type="ordered locus">At5g19880</name>
    <name type="ORF">F28I16.30</name>
</gene>
<comment type="function">
    <text>Removal of H(2)O(2), oxidation of toxic reductants, biosynthesis and degradation of lignin, suberization, auxin catabolism, response to environmental stresses such as wounding, pathogen attack and oxidative stress. These functions might be dependent on each isozyme/isoform in each plant tissue.</text>
</comment>
<comment type="catalytic activity">
    <reaction>
        <text>2 a phenolic donor + H2O2 = 2 a phenolic radical donor + 2 H2O</text>
        <dbReference type="Rhea" id="RHEA:56136"/>
        <dbReference type="ChEBI" id="CHEBI:15377"/>
        <dbReference type="ChEBI" id="CHEBI:16240"/>
        <dbReference type="ChEBI" id="CHEBI:139520"/>
        <dbReference type="ChEBI" id="CHEBI:139521"/>
        <dbReference type="EC" id="1.11.1.7"/>
    </reaction>
</comment>
<comment type="cofactor">
    <cofactor evidence="2">
        <name>heme b</name>
        <dbReference type="ChEBI" id="CHEBI:60344"/>
    </cofactor>
    <text evidence="2">Binds 1 heme b (iron(II)-protoporphyrin IX) group per subunit.</text>
</comment>
<comment type="cofactor">
    <cofactor evidence="2">
        <name>Ca(2+)</name>
        <dbReference type="ChEBI" id="CHEBI:29108"/>
    </cofactor>
    <text evidence="2">Binds 2 calcium ions per subunit.</text>
</comment>
<comment type="subcellular location">
    <subcellularLocation>
        <location evidence="2">Secreted</location>
    </subcellularLocation>
</comment>
<comment type="miscellaneous">
    <text>There are 73 peroxidase genes in A.thaliana.</text>
</comment>
<comment type="similarity">
    <text evidence="2">Belongs to the peroxidase family. Classical plant (class III) peroxidase subfamily.</text>
</comment>
<name>PER58_ARATH</name>
<evidence type="ECO:0000255" key="1"/>
<evidence type="ECO:0000255" key="2">
    <source>
        <dbReference type="PROSITE-ProRule" id="PRU00297"/>
    </source>
</evidence>
<evidence type="ECO:0000255" key="3">
    <source>
        <dbReference type="PROSITE-ProRule" id="PRU10012"/>
    </source>
</evidence>
<evidence type="ECO:0000305" key="4"/>
<keyword id="KW-0106">Calcium</keyword>
<keyword id="KW-1015">Disulfide bond</keyword>
<keyword id="KW-0325">Glycoprotein</keyword>
<keyword id="KW-0349">Heme</keyword>
<keyword id="KW-0376">Hydrogen peroxide</keyword>
<keyword id="KW-0408">Iron</keyword>
<keyword id="KW-0479">Metal-binding</keyword>
<keyword id="KW-0560">Oxidoreductase</keyword>
<keyword id="KW-0575">Peroxidase</keyword>
<keyword id="KW-1185">Reference proteome</keyword>
<keyword id="KW-0964">Secreted</keyword>
<keyword id="KW-0732">Signal</keyword>
<dbReference type="EC" id="1.11.1.7"/>
<dbReference type="EMBL" id="AF296836">
    <property type="status" value="NOT_ANNOTATED_CDS"/>
    <property type="molecule type" value="Genomic_DNA"/>
</dbReference>
<dbReference type="EMBL" id="CP002688">
    <property type="protein sequence ID" value="AED92761.1"/>
    <property type="molecule type" value="Genomic_DNA"/>
</dbReference>
<dbReference type="EMBL" id="AK118075">
    <property type="protein sequence ID" value="BAC42706.1"/>
    <property type="molecule type" value="mRNA"/>
</dbReference>
<dbReference type="EMBL" id="AY084241">
    <property type="protein sequence ID" value="AAM60837.1"/>
    <property type="molecule type" value="mRNA"/>
</dbReference>
<dbReference type="RefSeq" id="NP_197488.1">
    <property type="nucleotide sequence ID" value="NM_121995.2"/>
</dbReference>
<dbReference type="SMR" id="P59120"/>
<dbReference type="FunCoup" id="P59120">
    <property type="interactions" value="127"/>
</dbReference>
<dbReference type="STRING" id="3702.P59120"/>
<dbReference type="PeroxiBase" id="224">
    <property type="entry name" value="AtPrx58"/>
</dbReference>
<dbReference type="GlyCosmos" id="P59120">
    <property type="glycosylation" value="2 sites, No reported glycans"/>
</dbReference>
<dbReference type="GlyGen" id="P59120">
    <property type="glycosylation" value="2 sites"/>
</dbReference>
<dbReference type="PaxDb" id="3702-AT5G19880.1"/>
<dbReference type="ProteomicsDB" id="236458"/>
<dbReference type="EnsemblPlants" id="AT5G19880.1">
    <property type="protein sequence ID" value="AT5G19880.1"/>
    <property type="gene ID" value="AT5G19880"/>
</dbReference>
<dbReference type="GeneID" id="832110"/>
<dbReference type="Gramene" id="AT5G19880.1">
    <property type="protein sequence ID" value="AT5G19880.1"/>
    <property type="gene ID" value="AT5G19880"/>
</dbReference>
<dbReference type="KEGG" id="ath:AT5G19880"/>
<dbReference type="Araport" id="AT5G19880"/>
<dbReference type="TAIR" id="AT5G19880"/>
<dbReference type="eggNOG" id="ENOG502QVXS">
    <property type="taxonomic scope" value="Eukaryota"/>
</dbReference>
<dbReference type="HOGENOM" id="CLU_010543_0_1_1"/>
<dbReference type="InParanoid" id="P59120"/>
<dbReference type="OMA" id="CRVINAN"/>
<dbReference type="PhylomeDB" id="P59120"/>
<dbReference type="BioCyc" id="ARA:AT5G19880-MONOMER"/>
<dbReference type="PRO" id="PR:P59120"/>
<dbReference type="Proteomes" id="UP000006548">
    <property type="component" value="Chromosome 5"/>
</dbReference>
<dbReference type="ExpressionAtlas" id="P59120">
    <property type="expression patterns" value="baseline and differential"/>
</dbReference>
<dbReference type="GO" id="GO:0005576">
    <property type="term" value="C:extracellular region"/>
    <property type="evidence" value="ECO:0007669"/>
    <property type="project" value="UniProtKB-SubCell"/>
</dbReference>
<dbReference type="GO" id="GO:0020037">
    <property type="term" value="F:heme binding"/>
    <property type="evidence" value="ECO:0007669"/>
    <property type="project" value="InterPro"/>
</dbReference>
<dbReference type="GO" id="GO:0140825">
    <property type="term" value="F:lactoperoxidase activity"/>
    <property type="evidence" value="ECO:0007669"/>
    <property type="project" value="UniProtKB-EC"/>
</dbReference>
<dbReference type="GO" id="GO:0046872">
    <property type="term" value="F:metal ion binding"/>
    <property type="evidence" value="ECO:0007669"/>
    <property type="project" value="UniProtKB-KW"/>
</dbReference>
<dbReference type="GO" id="GO:0042744">
    <property type="term" value="P:hydrogen peroxide catabolic process"/>
    <property type="evidence" value="ECO:0007669"/>
    <property type="project" value="UniProtKB-KW"/>
</dbReference>
<dbReference type="GO" id="GO:0006979">
    <property type="term" value="P:response to oxidative stress"/>
    <property type="evidence" value="ECO:0007669"/>
    <property type="project" value="InterPro"/>
</dbReference>
<dbReference type="CDD" id="cd00693">
    <property type="entry name" value="secretory_peroxidase"/>
    <property type="match status" value="1"/>
</dbReference>
<dbReference type="FunFam" id="1.10.420.10:FF:000001">
    <property type="entry name" value="Peroxidase"/>
    <property type="match status" value="1"/>
</dbReference>
<dbReference type="Gene3D" id="1.10.520.10">
    <property type="match status" value="1"/>
</dbReference>
<dbReference type="Gene3D" id="1.10.420.10">
    <property type="entry name" value="Peroxidase, domain 2"/>
    <property type="match status" value="1"/>
</dbReference>
<dbReference type="InterPro" id="IPR002016">
    <property type="entry name" value="Haem_peroxidase"/>
</dbReference>
<dbReference type="InterPro" id="IPR010255">
    <property type="entry name" value="Haem_peroxidase_sf"/>
</dbReference>
<dbReference type="InterPro" id="IPR000823">
    <property type="entry name" value="Peroxidase_pln"/>
</dbReference>
<dbReference type="InterPro" id="IPR019794">
    <property type="entry name" value="Peroxidases_AS"/>
</dbReference>
<dbReference type="InterPro" id="IPR019793">
    <property type="entry name" value="Peroxidases_heam-ligand_BS"/>
</dbReference>
<dbReference type="InterPro" id="IPR033905">
    <property type="entry name" value="Secretory_peroxidase"/>
</dbReference>
<dbReference type="PANTHER" id="PTHR31388:SF147">
    <property type="entry name" value="PEROXIDASE 58"/>
    <property type="match status" value="1"/>
</dbReference>
<dbReference type="PANTHER" id="PTHR31388">
    <property type="entry name" value="PEROXIDASE 72-RELATED"/>
    <property type="match status" value="1"/>
</dbReference>
<dbReference type="Pfam" id="PF00141">
    <property type="entry name" value="peroxidase"/>
    <property type="match status" value="1"/>
</dbReference>
<dbReference type="PRINTS" id="PR00458">
    <property type="entry name" value="PEROXIDASE"/>
</dbReference>
<dbReference type="PRINTS" id="PR00461">
    <property type="entry name" value="PLPEROXIDASE"/>
</dbReference>
<dbReference type="SUPFAM" id="SSF48113">
    <property type="entry name" value="Heme-dependent peroxidases"/>
    <property type="match status" value="1"/>
</dbReference>
<dbReference type="PROSITE" id="PS00435">
    <property type="entry name" value="PEROXIDASE_1"/>
    <property type="match status" value="1"/>
</dbReference>
<dbReference type="PROSITE" id="PS00436">
    <property type="entry name" value="PEROXIDASE_2"/>
    <property type="match status" value="1"/>
</dbReference>
<dbReference type="PROSITE" id="PS50873">
    <property type="entry name" value="PEROXIDASE_4"/>
    <property type="match status" value="1"/>
</dbReference>
<accession>P59120</accession>